<feature type="chain" id="PRO_0000411548" description="Ribonuclease HII">
    <location>
        <begin position="1"/>
        <end position="263"/>
    </location>
</feature>
<feature type="domain" description="RNase H type-2" evidence="2">
    <location>
        <begin position="71"/>
        <end position="262"/>
    </location>
</feature>
<feature type="binding site" evidence="1">
    <location>
        <position position="77"/>
    </location>
    <ligand>
        <name>a divalent metal cation</name>
        <dbReference type="ChEBI" id="CHEBI:60240"/>
    </ligand>
</feature>
<feature type="binding site" evidence="1">
    <location>
        <position position="78"/>
    </location>
    <ligand>
        <name>a divalent metal cation</name>
        <dbReference type="ChEBI" id="CHEBI:60240"/>
    </ligand>
</feature>
<feature type="binding site" evidence="1">
    <location>
        <position position="172"/>
    </location>
    <ligand>
        <name>a divalent metal cation</name>
        <dbReference type="ChEBI" id="CHEBI:60240"/>
    </ligand>
</feature>
<gene>
    <name evidence="1" type="primary">rnhB</name>
    <name type="ordered locus">SPs1019</name>
</gene>
<name>RNH2_STRPQ</name>
<comment type="function">
    <text evidence="1">Endonuclease that specifically degrades the RNA of RNA-DNA hybrids.</text>
</comment>
<comment type="catalytic activity">
    <reaction evidence="1">
        <text>Endonucleolytic cleavage to 5'-phosphomonoester.</text>
        <dbReference type="EC" id="3.1.26.4"/>
    </reaction>
</comment>
<comment type="cofactor">
    <cofactor evidence="1">
        <name>Mn(2+)</name>
        <dbReference type="ChEBI" id="CHEBI:29035"/>
    </cofactor>
    <cofactor evidence="1">
        <name>Mg(2+)</name>
        <dbReference type="ChEBI" id="CHEBI:18420"/>
    </cofactor>
    <text evidence="1">Manganese or magnesium. Binds 1 divalent metal ion per monomer in the absence of substrate. May bind a second metal ion after substrate binding.</text>
</comment>
<comment type="subcellular location">
    <subcellularLocation>
        <location evidence="1">Cytoplasm</location>
    </subcellularLocation>
</comment>
<comment type="similarity">
    <text evidence="1">Belongs to the RNase HII family.</text>
</comment>
<dbReference type="EC" id="3.1.26.4" evidence="1"/>
<dbReference type="EMBL" id="BA000034">
    <property type="protein sequence ID" value="BAC64114.1"/>
    <property type="molecule type" value="Genomic_DNA"/>
</dbReference>
<dbReference type="RefSeq" id="WP_011054500.1">
    <property type="nucleotide sequence ID" value="NC_004606.1"/>
</dbReference>
<dbReference type="SMR" id="P0DF17"/>
<dbReference type="KEGG" id="sps:SPs1019"/>
<dbReference type="HOGENOM" id="CLU_036532_2_1_9"/>
<dbReference type="GO" id="GO:0005737">
    <property type="term" value="C:cytoplasm"/>
    <property type="evidence" value="ECO:0007669"/>
    <property type="project" value="UniProtKB-SubCell"/>
</dbReference>
<dbReference type="GO" id="GO:0032299">
    <property type="term" value="C:ribonuclease H2 complex"/>
    <property type="evidence" value="ECO:0007669"/>
    <property type="project" value="TreeGrafter"/>
</dbReference>
<dbReference type="GO" id="GO:0030145">
    <property type="term" value="F:manganese ion binding"/>
    <property type="evidence" value="ECO:0007669"/>
    <property type="project" value="UniProtKB-UniRule"/>
</dbReference>
<dbReference type="GO" id="GO:0003723">
    <property type="term" value="F:RNA binding"/>
    <property type="evidence" value="ECO:0007669"/>
    <property type="project" value="InterPro"/>
</dbReference>
<dbReference type="GO" id="GO:0004523">
    <property type="term" value="F:RNA-DNA hybrid ribonuclease activity"/>
    <property type="evidence" value="ECO:0007669"/>
    <property type="project" value="UniProtKB-UniRule"/>
</dbReference>
<dbReference type="GO" id="GO:0043137">
    <property type="term" value="P:DNA replication, removal of RNA primer"/>
    <property type="evidence" value="ECO:0007669"/>
    <property type="project" value="TreeGrafter"/>
</dbReference>
<dbReference type="GO" id="GO:0006298">
    <property type="term" value="P:mismatch repair"/>
    <property type="evidence" value="ECO:0007669"/>
    <property type="project" value="TreeGrafter"/>
</dbReference>
<dbReference type="CDD" id="cd07182">
    <property type="entry name" value="RNase_HII_bacteria_HII_like"/>
    <property type="match status" value="1"/>
</dbReference>
<dbReference type="FunFam" id="3.30.420.10:FF:000006">
    <property type="entry name" value="Ribonuclease HII"/>
    <property type="match status" value="1"/>
</dbReference>
<dbReference type="Gene3D" id="3.30.420.10">
    <property type="entry name" value="Ribonuclease H-like superfamily/Ribonuclease H"/>
    <property type="match status" value="1"/>
</dbReference>
<dbReference type="HAMAP" id="MF_00052_B">
    <property type="entry name" value="RNase_HII_B"/>
    <property type="match status" value="1"/>
</dbReference>
<dbReference type="InterPro" id="IPR022898">
    <property type="entry name" value="RNase_HII"/>
</dbReference>
<dbReference type="InterPro" id="IPR001352">
    <property type="entry name" value="RNase_HII/HIII"/>
</dbReference>
<dbReference type="InterPro" id="IPR024567">
    <property type="entry name" value="RNase_HII/HIII_dom"/>
</dbReference>
<dbReference type="InterPro" id="IPR012337">
    <property type="entry name" value="RNaseH-like_sf"/>
</dbReference>
<dbReference type="InterPro" id="IPR036397">
    <property type="entry name" value="RNaseH_sf"/>
</dbReference>
<dbReference type="NCBIfam" id="NF000594">
    <property type="entry name" value="PRK00015.1-1"/>
    <property type="match status" value="1"/>
</dbReference>
<dbReference type="NCBIfam" id="NF000595">
    <property type="entry name" value="PRK00015.1-3"/>
    <property type="match status" value="1"/>
</dbReference>
<dbReference type="PANTHER" id="PTHR10954">
    <property type="entry name" value="RIBONUCLEASE H2 SUBUNIT A"/>
    <property type="match status" value="1"/>
</dbReference>
<dbReference type="PANTHER" id="PTHR10954:SF18">
    <property type="entry name" value="RIBONUCLEASE HII"/>
    <property type="match status" value="1"/>
</dbReference>
<dbReference type="Pfam" id="PF01351">
    <property type="entry name" value="RNase_HII"/>
    <property type="match status" value="1"/>
</dbReference>
<dbReference type="SUPFAM" id="SSF53098">
    <property type="entry name" value="Ribonuclease H-like"/>
    <property type="match status" value="1"/>
</dbReference>
<dbReference type="PROSITE" id="PS51975">
    <property type="entry name" value="RNASE_H_2"/>
    <property type="match status" value="1"/>
</dbReference>
<keyword id="KW-0963">Cytoplasm</keyword>
<keyword id="KW-0255">Endonuclease</keyword>
<keyword id="KW-0378">Hydrolase</keyword>
<keyword id="KW-0464">Manganese</keyword>
<keyword id="KW-0479">Metal-binding</keyword>
<keyword id="KW-0540">Nuclease</keyword>
<accession>P0DF17</accession>
<accession>Q8K7G7</accession>
<sequence length="263" mass="28709">MPTSIKAIKESLEAVTSLLDPLFQELATDTRSGVQKALKSRQKAIQADLAEEERLEAMLSYEKALYKEGYQAIAGIDEVGRGPLAGPVVAACVILPQHCKIKGLNDSKKIPKAKHETIYQAVKEKALAIGIGIIDNQLIDEVNIYEATKLAMLEAIKQLEGQLTQPDYLLIDAMTLDIAISQQSILKGDANSLSIAAASIVAKVTRDQMMANYDRIFPGYGFAKNAGYGTKEHLQELKAYGITPIHRKSFEPVKSMCCDSTNP</sequence>
<protein>
    <recommendedName>
        <fullName evidence="1">Ribonuclease HII</fullName>
        <shortName evidence="1">RNase HII</shortName>
        <ecNumber evidence="1">3.1.26.4</ecNumber>
    </recommendedName>
</protein>
<proteinExistence type="inferred from homology"/>
<reference key="1">
    <citation type="journal article" date="2003" name="Genome Res.">
        <title>Genome sequence of an M3 strain of Streptococcus pyogenes reveals a large-scale genomic rearrangement in invasive strains and new insights into phage evolution.</title>
        <authorList>
            <person name="Nakagawa I."/>
            <person name="Kurokawa K."/>
            <person name="Yamashita A."/>
            <person name="Nakata M."/>
            <person name="Tomiyasu Y."/>
            <person name="Okahashi N."/>
            <person name="Kawabata S."/>
            <person name="Yamazaki K."/>
            <person name="Shiba T."/>
            <person name="Yasunaga T."/>
            <person name="Hayashi H."/>
            <person name="Hattori M."/>
            <person name="Hamada S."/>
        </authorList>
    </citation>
    <scope>NUCLEOTIDE SEQUENCE [LARGE SCALE GENOMIC DNA]</scope>
    <source>
        <strain>SSI-1</strain>
    </source>
</reference>
<organism>
    <name type="scientific">Streptococcus pyogenes serotype M3 (strain SSI-1)</name>
    <dbReference type="NCBI Taxonomy" id="193567"/>
    <lineage>
        <taxon>Bacteria</taxon>
        <taxon>Bacillati</taxon>
        <taxon>Bacillota</taxon>
        <taxon>Bacilli</taxon>
        <taxon>Lactobacillales</taxon>
        <taxon>Streptococcaceae</taxon>
        <taxon>Streptococcus</taxon>
    </lineage>
</organism>
<evidence type="ECO:0000255" key="1">
    <source>
        <dbReference type="HAMAP-Rule" id="MF_00052"/>
    </source>
</evidence>
<evidence type="ECO:0000255" key="2">
    <source>
        <dbReference type="PROSITE-ProRule" id="PRU01319"/>
    </source>
</evidence>